<evidence type="ECO:0000255" key="1">
    <source>
        <dbReference type="PROSITE-ProRule" id="PRU00251"/>
    </source>
</evidence>
<evidence type="ECO:0000256" key="2">
    <source>
        <dbReference type="SAM" id="MobiDB-lite"/>
    </source>
</evidence>
<evidence type="ECO:0000269" key="3">
    <source>
    </source>
</evidence>
<feature type="chain" id="PRO_0000199444" description="MADS-box transcription factor pvg4">
    <location>
        <begin position="1"/>
        <end position="372"/>
    </location>
</feature>
<feature type="domain" description="MADS-box" evidence="1">
    <location>
        <begin position="1"/>
        <end position="61"/>
    </location>
</feature>
<feature type="region of interest" description="Disordered" evidence="2">
    <location>
        <begin position="81"/>
        <end position="187"/>
    </location>
</feature>
<feature type="compositionally biased region" description="Low complexity" evidence="2">
    <location>
        <begin position="84"/>
        <end position="100"/>
    </location>
</feature>
<feature type="compositionally biased region" description="Polar residues" evidence="2">
    <location>
        <begin position="114"/>
        <end position="145"/>
    </location>
</feature>
<feature type="compositionally biased region" description="Basic residues" evidence="2">
    <location>
        <begin position="167"/>
        <end position="184"/>
    </location>
</feature>
<name>PVG4_SCHPO</name>
<organism>
    <name type="scientific">Schizosaccharomyces pombe (strain 972 / ATCC 24843)</name>
    <name type="common">Fission yeast</name>
    <dbReference type="NCBI Taxonomy" id="284812"/>
    <lineage>
        <taxon>Eukaryota</taxon>
        <taxon>Fungi</taxon>
        <taxon>Dikarya</taxon>
        <taxon>Ascomycota</taxon>
        <taxon>Taphrinomycotina</taxon>
        <taxon>Schizosaccharomycetes</taxon>
        <taxon>Schizosaccharomycetales</taxon>
        <taxon>Schizosaccharomycetaceae</taxon>
        <taxon>Schizosaccharomyces</taxon>
    </lineage>
</organism>
<dbReference type="EMBL" id="CU329671">
    <property type="protein sequence ID" value="CAC01946.1"/>
    <property type="molecule type" value="Genomic_DNA"/>
</dbReference>
<dbReference type="RefSeq" id="NP_596507.1">
    <property type="nucleotide sequence ID" value="NM_001022428.2"/>
</dbReference>
<dbReference type="SMR" id="Q9HGP0"/>
<dbReference type="BioGRID" id="276879">
    <property type="interactions" value="39"/>
</dbReference>
<dbReference type="IntAct" id="Q9HGP0">
    <property type="interactions" value="4"/>
</dbReference>
<dbReference type="STRING" id="284812.Q9HGP0"/>
<dbReference type="iPTMnet" id="Q9HGP0"/>
<dbReference type="PaxDb" id="4896-SPBC317.01.1"/>
<dbReference type="EnsemblFungi" id="SPBC317.01.1">
    <property type="protein sequence ID" value="SPBC317.01.1:pep"/>
    <property type="gene ID" value="SPBC317.01"/>
</dbReference>
<dbReference type="GeneID" id="2540350"/>
<dbReference type="KEGG" id="spo:2540350"/>
<dbReference type="PomBase" id="SPBC317.01"/>
<dbReference type="VEuPathDB" id="FungiDB:SPBC317.01"/>
<dbReference type="eggNOG" id="KOG0014">
    <property type="taxonomic scope" value="Eukaryota"/>
</dbReference>
<dbReference type="HOGENOM" id="CLU_744251_0_0_1"/>
<dbReference type="InParanoid" id="Q9HGP0"/>
<dbReference type="Reactome" id="R-SPO-525793">
    <property type="pathway name" value="Myogenesis"/>
</dbReference>
<dbReference type="PRO" id="PR:Q9HGP0"/>
<dbReference type="Proteomes" id="UP000002485">
    <property type="component" value="Chromosome II"/>
</dbReference>
<dbReference type="GO" id="GO:0000785">
    <property type="term" value="C:chromatin"/>
    <property type="evidence" value="ECO:0000314"/>
    <property type="project" value="PomBase"/>
</dbReference>
<dbReference type="GO" id="GO:0005829">
    <property type="term" value="C:cytosol"/>
    <property type="evidence" value="ECO:0007005"/>
    <property type="project" value="PomBase"/>
</dbReference>
<dbReference type="GO" id="GO:0005635">
    <property type="term" value="C:nuclear envelope"/>
    <property type="evidence" value="ECO:0007005"/>
    <property type="project" value="PomBase"/>
</dbReference>
<dbReference type="GO" id="GO:0005634">
    <property type="term" value="C:nucleus"/>
    <property type="evidence" value="ECO:0000314"/>
    <property type="project" value="PomBase"/>
</dbReference>
<dbReference type="GO" id="GO:0000981">
    <property type="term" value="F:DNA-binding transcription factor activity, RNA polymerase II-specific"/>
    <property type="evidence" value="ECO:0000318"/>
    <property type="project" value="GO_Central"/>
</dbReference>
<dbReference type="GO" id="GO:0046983">
    <property type="term" value="F:protein dimerization activity"/>
    <property type="evidence" value="ECO:0007669"/>
    <property type="project" value="InterPro"/>
</dbReference>
<dbReference type="GO" id="GO:0000978">
    <property type="term" value="F:RNA polymerase II cis-regulatory region sequence-specific DNA binding"/>
    <property type="evidence" value="ECO:0000318"/>
    <property type="project" value="GO_Central"/>
</dbReference>
<dbReference type="GO" id="GO:0045785">
    <property type="term" value="P:positive regulation of cell adhesion"/>
    <property type="evidence" value="ECO:0000315"/>
    <property type="project" value="PomBase"/>
</dbReference>
<dbReference type="GO" id="GO:1900735">
    <property type="term" value="P:positive regulation of flocculation"/>
    <property type="evidence" value="ECO:0000315"/>
    <property type="project" value="PomBase"/>
</dbReference>
<dbReference type="GO" id="GO:0045944">
    <property type="term" value="P:positive regulation of transcription by RNA polymerase II"/>
    <property type="evidence" value="ECO:0000315"/>
    <property type="project" value="PomBase"/>
</dbReference>
<dbReference type="CDD" id="cd00266">
    <property type="entry name" value="MADS_SRF_like"/>
    <property type="match status" value="1"/>
</dbReference>
<dbReference type="FunFam" id="3.40.1810.10:FF:000052">
    <property type="entry name" value="MADS-box transcription factor pvg4"/>
    <property type="match status" value="1"/>
</dbReference>
<dbReference type="Gene3D" id="3.40.1810.10">
    <property type="entry name" value="Transcription factor, MADS-box"/>
    <property type="match status" value="1"/>
</dbReference>
<dbReference type="InterPro" id="IPR050142">
    <property type="entry name" value="MADS-box/MEF2_TF"/>
</dbReference>
<dbReference type="InterPro" id="IPR033897">
    <property type="entry name" value="SRF-like_MADS-box"/>
</dbReference>
<dbReference type="InterPro" id="IPR002100">
    <property type="entry name" value="TF_MADSbox"/>
</dbReference>
<dbReference type="InterPro" id="IPR036879">
    <property type="entry name" value="TF_MADSbox_sf"/>
</dbReference>
<dbReference type="PANTHER" id="PTHR48019">
    <property type="entry name" value="SERUM RESPONSE FACTOR HOMOLOG"/>
    <property type="match status" value="1"/>
</dbReference>
<dbReference type="Pfam" id="PF00319">
    <property type="entry name" value="SRF-TF"/>
    <property type="match status" value="1"/>
</dbReference>
<dbReference type="PRINTS" id="PR00404">
    <property type="entry name" value="MADSDOMAIN"/>
</dbReference>
<dbReference type="SMART" id="SM00432">
    <property type="entry name" value="MADS"/>
    <property type="match status" value="1"/>
</dbReference>
<dbReference type="SUPFAM" id="SSF55455">
    <property type="entry name" value="SRF-like"/>
    <property type="match status" value="1"/>
</dbReference>
<dbReference type="PROSITE" id="PS00350">
    <property type="entry name" value="MADS_BOX_1"/>
    <property type="match status" value="1"/>
</dbReference>
<dbReference type="PROSITE" id="PS50066">
    <property type="entry name" value="MADS_BOX_2"/>
    <property type="match status" value="1"/>
</dbReference>
<reference key="1">
    <citation type="journal article" date="2002" name="Nature">
        <title>The genome sequence of Schizosaccharomyces pombe.</title>
        <authorList>
            <person name="Wood V."/>
            <person name="Gwilliam R."/>
            <person name="Rajandream M.A."/>
            <person name="Lyne M.H."/>
            <person name="Lyne R."/>
            <person name="Stewart A."/>
            <person name="Sgouros J.G."/>
            <person name="Peat N."/>
            <person name="Hayles J."/>
            <person name="Baker S.G."/>
            <person name="Basham D."/>
            <person name="Bowman S."/>
            <person name="Brooks K."/>
            <person name="Brown D."/>
            <person name="Brown S."/>
            <person name="Chillingworth T."/>
            <person name="Churcher C.M."/>
            <person name="Collins M."/>
            <person name="Connor R."/>
            <person name="Cronin A."/>
            <person name="Davis P."/>
            <person name="Feltwell T."/>
            <person name="Fraser A."/>
            <person name="Gentles S."/>
            <person name="Goble A."/>
            <person name="Hamlin N."/>
            <person name="Harris D.E."/>
            <person name="Hidalgo J."/>
            <person name="Hodgson G."/>
            <person name="Holroyd S."/>
            <person name="Hornsby T."/>
            <person name="Howarth S."/>
            <person name="Huckle E.J."/>
            <person name="Hunt S."/>
            <person name="Jagels K."/>
            <person name="James K.D."/>
            <person name="Jones L."/>
            <person name="Jones M."/>
            <person name="Leather S."/>
            <person name="McDonald S."/>
            <person name="McLean J."/>
            <person name="Mooney P."/>
            <person name="Moule S."/>
            <person name="Mungall K.L."/>
            <person name="Murphy L.D."/>
            <person name="Niblett D."/>
            <person name="Odell C."/>
            <person name="Oliver K."/>
            <person name="O'Neil S."/>
            <person name="Pearson D."/>
            <person name="Quail M.A."/>
            <person name="Rabbinowitsch E."/>
            <person name="Rutherford K.M."/>
            <person name="Rutter S."/>
            <person name="Saunders D."/>
            <person name="Seeger K."/>
            <person name="Sharp S."/>
            <person name="Skelton J."/>
            <person name="Simmonds M.N."/>
            <person name="Squares R."/>
            <person name="Squares S."/>
            <person name="Stevens K."/>
            <person name="Taylor K."/>
            <person name="Taylor R.G."/>
            <person name="Tivey A."/>
            <person name="Walsh S.V."/>
            <person name="Warren T."/>
            <person name="Whitehead S."/>
            <person name="Woodward J.R."/>
            <person name="Volckaert G."/>
            <person name="Aert R."/>
            <person name="Robben J."/>
            <person name="Grymonprez B."/>
            <person name="Weltjens I."/>
            <person name="Vanstreels E."/>
            <person name="Rieger M."/>
            <person name="Schaefer M."/>
            <person name="Mueller-Auer S."/>
            <person name="Gabel C."/>
            <person name="Fuchs M."/>
            <person name="Duesterhoeft A."/>
            <person name="Fritzc C."/>
            <person name="Holzer E."/>
            <person name="Moestl D."/>
            <person name="Hilbert H."/>
            <person name="Borzym K."/>
            <person name="Langer I."/>
            <person name="Beck A."/>
            <person name="Lehrach H."/>
            <person name="Reinhardt R."/>
            <person name="Pohl T.M."/>
            <person name="Eger P."/>
            <person name="Zimmermann W."/>
            <person name="Wedler H."/>
            <person name="Wambutt R."/>
            <person name="Purnelle B."/>
            <person name="Goffeau A."/>
            <person name="Cadieu E."/>
            <person name="Dreano S."/>
            <person name="Gloux S."/>
            <person name="Lelaure V."/>
            <person name="Mottier S."/>
            <person name="Galibert F."/>
            <person name="Aves S.J."/>
            <person name="Xiang Z."/>
            <person name="Hunt C."/>
            <person name="Moore K."/>
            <person name="Hurst S.M."/>
            <person name="Lucas M."/>
            <person name="Rochet M."/>
            <person name="Gaillardin C."/>
            <person name="Tallada V.A."/>
            <person name="Garzon A."/>
            <person name="Thode G."/>
            <person name="Daga R.R."/>
            <person name="Cruzado L."/>
            <person name="Jimenez J."/>
            <person name="Sanchez M."/>
            <person name="del Rey F."/>
            <person name="Benito J."/>
            <person name="Dominguez A."/>
            <person name="Revuelta J.L."/>
            <person name="Moreno S."/>
            <person name="Armstrong J."/>
            <person name="Forsburg S.L."/>
            <person name="Cerutti L."/>
            <person name="Lowe T."/>
            <person name="McCombie W.R."/>
            <person name="Paulsen I."/>
            <person name="Potashkin J."/>
            <person name="Shpakovski G.V."/>
            <person name="Ussery D."/>
            <person name="Barrell B.G."/>
            <person name="Nurse P."/>
        </authorList>
    </citation>
    <scope>NUCLEOTIDE SEQUENCE [LARGE SCALE GENOMIC DNA]</scope>
    <source>
        <strain>972 / ATCC 24843</strain>
    </source>
</reference>
<reference key="2">
    <citation type="journal article" date="2004" name="J. Biol. Chem.">
        <title>Five genes involved in biosynthesis of the pyruvylated Galbeta1,3-epitope in Schizosaccharomyces pombe N-linked glycans.</title>
        <authorList>
            <person name="Andreishcheva E.N."/>
            <person name="Kunkel J.P."/>
            <person name="Gemmill T.R."/>
            <person name="Trimble R.B."/>
        </authorList>
    </citation>
    <scope>FUNCTION</scope>
    <scope>SUBCELLULAR LOCATION</scope>
</reference>
<comment type="function">
    <text evidence="3">Acts in transcription regulation. May bind to a MEF2-like typee II promoter sequence.</text>
</comment>
<comment type="subcellular location">
    <subcellularLocation>
        <location evidence="1 3">Nucleus</location>
    </subcellularLocation>
</comment>
<keyword id="KW-0238">DNA-binding</keyword>
<keyword id="KW-0539">Nucleus</keyword>
<keyword id="KW-1185">Reference proteome</keyword>
<keyword id="KW-0804">Transcription</keyword>
<keyword id="KW-0805">Transcription regulation</keyword>
<gene>
    <name type="primary">pvg4</name>
    <name type="synonym">mbx2</name>
    <name type="ORF">SPBC317.01</name>
</gene>
<proteinExistence type="inferred from homology"/>
<sequence length="372" mass="41572">MGRKKISIAPITDDRSRSVTFVKRKQGLYKKAYELAVLADCEVAVTVIDRKGRLHVFCSSDYQRTLQQLNTLSIYELKNRSHFSSSPVEESSTVSPETTTGSFTPLNNKHLKSQDQPLSDSQLDTGDSPATSETTVQDYNPQVQSYCRPEPLSSNHVRSCPPFPPTQHHHPHTRPPHHPPHPHFHNNNYPPPYCFQSPVSPGATVPLQHHSPYPSDNGFPGHRRQTHFAPYYYPQRATSPSLKQVPTYLGTHVLQQDQSTYDQKVLMPPASYLSSPNQYTLKNVSPGNPACPPFLYEHPNPQLTPEMFDVKQGSPIPPTAYSGSSCETSQHTIANTPFLAYDRSPSLTNQEAESSFQDVASISPHSLSDVKY</sequence>
<protein>
    <recommendedName>
        <fullName>MADS-box transcription factor pvg4</fullName>
    </recommendedName>
    <alternativeName>
        <fullName>MADS-box transcription factor 2</fullName>
    </alternativeName>
    <alternativeName>
        <fullName>Pyruvylated Gal-beta-1,3-epitope synthesis protein 4</fullName>
        <shortName>PvGal synthesis protein 4</shortName>
    </alternativeName>
</protein>
<accession>Q9HGP0</accession>